<dbReference type="EMBL" id="AL123456">
    <property type="protein sequence ID" value="CCP46106.1"/>
    <property type="status" value="ALT_INIT"/>
    <property type="molecule type" value="Genomic_DNA"/>
</dbReference>
<dbReference type="RefSeq" id="NP_217804.4">
    <property type="nucleotide sequence ID" value="NC_000962.3"/>
</dbReference>
<dbReference type="PDB" id="8IH8">
    <property type="method" value="X-ray"/>
    <property type="resolution" value="2.00 A"/>
    <property type="chains" value="C/D=24-168"/>
</dbReference>
<dbReference type="PDB" id="8JZT">
    <property type="method" value="X-ray"/>
    <property type="resolution" value="1.94 A"/>
    <property type="chains" value="B/D/F=35-168"/>
</dbReference>
<dbReference type="PDBsum" id="8IH8"/>
<dbReference type="PDBsum" id="8JZT"/>
<dbReference type="SMR" id="P9WGX7"/>
<dbReference type="FunCoup" id="P9WGX7">
    <property type="interactions" value="2"/>
</dbReference>
<dbReference type="IntAct" id="P9WGX7">
    <property type="interactions" value="6"/>
</dbReference>
<dbReference type="STRING" id="83332.Rv3287c"/>
<dbReference type="PaxDb" id="83332-Rv3287c"/>
<dbReference type="DNASU" id="887977"/>
<dbReference type="GeneID" id="887977"/>
<dbReference type="KEGG" id="mtu:Rv3287c"/>
<dbReference type="TubercuList" id="Rv3287c"/>
<dbReference type="eggNOG" id="COG2172">
    <property type="taxonomic scope" value="Bacteria"/>
</dbReference>
<dbReference type="InParanoid" id="P9WGX7"/>
<dbReference type="OrthoDB" id="3694612at2"/>
<dbReference type="Proteomes" id="UP000001584">
    <property type="component" value="Chromosome"/>
</dbReference>
<dbReference type="GO" id="GO:0005524">
    <property type="term" value="F:ATP binding"/>
    <property type="evidence" value="ECO:0007669"/>
    <property type="project" value="UniProtKB-KW"/>
</dbReference>
<dbReference type="GO" id="GO:0016787">
    <property type="term" value="F:hydrolase activity"/>
    <property type="evidence" value="ECO:0007669"/>
    <property type="project" value="UniProtKB-KW"/>
</dbReference>
<dbReference type="GO" id="GO:0000166">
    <property type="term" value="F:nucleotide binding"/>
    <property type="evidence" value="ECO:0000314"/>
    <property type="project" value="MTBBASE"/>
</dbReference>
<dbReference type="GO" id="GO:0016989">
    <property type="term" value="F:sigma factor antagonist activity"/>
    <property type="evidence" value="ECO:0000314"/>
    <property type="project" value="MTBBASE"/>
</dbReference>
<dbReference type="GO" id="GO:0045892">
    <property type="term" value="P:negative regulation of DNA-templated transcription"/>
    <property type="evidence" value="ECO:0000314"/>
    <property type="project" value="MTBBASE"/>
</dbReference>
<organism>
    <name type="scientific">Mycobacterium tuberculosis (strain ATCC 25618 / H37Rv)</name>
    <dbReference type="NCBI Taxonomy" id="83332"/>
    <lineage>
        <taxon>Bacteria</taxon>
        <taxon>Bacillati</taxon>
        <taxon>Actinomycetota</taxon>
        <taxon>Actinomycetes</taxon>
        <taxon>Mycobacteriales</taxon>
        <taxon>Mycobacteriaceae</taxon>
        <taxon>Mycobacterium</taxon>
        <taxon>Mycobacterium tuberculosis complex</taxon>
    </lineage>
</organism>
<proteinExistence type="evidence at protein level"/>
<evidence type="ECO:0000255" key="1"/>
<evidence type="ECO:0000256" key="2">
    <source>
        <dbReference type="SAM" id="MobiDB-lite"/>
    </source>
</evidence>
<evidence type="ECO:0000269" key="3">
    <source>
    </source>
</evidence>
<evidence type="ECO:0000269" key="4">
    <source>
    </source>
</evidence>
<evidence type="ECO:0000269" key="5">
    <source>
    </source>
</evidence>
<evidence type="ECO:0000269" key="6">
    <source>
    </source>
</evidence>
<evidence type="ECO:0000269" key="7">
    <source>
    </source>
</evidence>
<evidence type="ECO:0000269" key="8">
    <source>
    </source>
</evidence>
<evidence type="ECO:0000269" key="9">
    <source>
    </source>
</evidence>
<evidence type="ECO:0000305" key="10"/>
<comment type="function">
    <text evidence="4">A cognate anti-sigma factor for alternative sigma factor SigF. Alternative sigma factors are held in an inactive form by an anti-sigma factor. Binds ATP and GTP, may hydrolyze both.</text>
</comment>
<comment type="subunit">
    <text evidence="4 5 6 7 9 10">Homodimer (Probable). Interacts with cognate RNA polymerase sigma factor SigF with a possible 2:1 RbsW:SigF stoichiometry; this inhibits the interaction of SigF with the RNA polymerase catalytic core. Interacts with anti-sigma-F factor antagonist RsfA with a possible 2:1 RbsW:RsfA stoichiometry; this blocks binding to SigF, thus indirectly activating transcription. Interacts with GTPase Obg (PubMed:21352546).</text>
</comment>
<comment type="induction">
    <text evidence="3">9-fold induced by starvation.</text>
</comment>
<comment type="domain">
    <text>The cytosolic domain interacts with sigma factor SigF.</text>
</comment>
<comment type="disruption phenotype">
    <text evidence="8">A double rsbW-sigF disruption shows no effect in the presence or absence of rifampicin.</text>
</comment>
<comment type="similarity">
    <text evidence="10">Belongs to the anti-sigma-factor family.</text>
</comment>
<comment type="sequence caution">
    <conflict type="erroneous initiation">
        <sequence resource="EMBL-CDS" id="CCP46106"/>
    </conflict>
    <text>Truncated N-terminus.</text>
</comment>
<gene>
    <name type="primary">rsbW</name>
    <name type="synonym">usfX</name>
    <name type="ordered locus">Rv3287c</name>
</gene>
<reference key="1">
    <citation type="journal article" date="1998" name="Nature">
        <title>Deciphering the biology of Mycobacterium tuberculosis from the complete genome sequence.</title>
        <authorList>
            <person name="Cole S.T."/>
            <person name="Brosch R."/>
            <person name="Parkhill J."/>
            <person name="Garnier T."/>
            <person name="Churcher C.M."/>
            <person name="Harris D.E."/>
            <person name="Gordon S.V."/>
            <person name="Eiglmeier K."/>
            <person name="Gas S."/>
            <person name="Barry C.E. III"/>
            <person name="Tekaia F."/>
            <person name="Badcock K."/>
            <person name="Basham D."/>
            <person name="Brown D."/>
            <person name="Chillingworth T."/>
            <person name="Connor R."/>
            <person name="Davies R.M."/>
            <person name="Devlin K."/>
            <person name="Feltwell T."/>
            <person name="Gentles S."/>
            <person name="Hamlin N."/>
            <person name="Holroyd S."/>
            <person name="Hornsby T."/>
            <person name="Jagels K."/>
            <person name="Krogh A."/>
            <person name="McLean J."/>
            <person name="Moule S."/>
            <person name="Murphy L.D."/>
            <person name="Oliver S."/>
            <person name="Osborne J."/>
            <person name="Quail M.A."/>
            <person name="Rajandream M.A."/>
            <person name="Rogers J."/>
            <person name="Rutter S."/>
            <person name="Seeger K."/>
            <person name="Skelton S."/>
            <person name="Squares S."/>
            <person name="Squares R."/>
            <person name="Sulston J.E."/>
            <person name="Taylor K."/>
            <person name="Whitehead S."/>
            <person name="Barrell B.G."/>
        </authorList>
    </citation>
    <scope>NUCLEOTIDE SEQUENCE [LARGE SCALE GENOMIC DNA]</scope>
    <source>
        <strain>ATCC 25618 / H37Rv</strain>
    </source>
</reference>
<reference key="2">
    <citation type="journal article" date="2002" name="Microbiology">
        <title>Re-annotation of the genome sequence of Mycobacterium tuberculosis H37Rv.</title>
        <authorList>
            <person name="Camus J.-C."/>
            <person name="Pryor M.J."/>
            <person name="Medigue C."/>
            <person name="Cole S.T."/>
        </authorList>
    </citation>
    <scope>SEQUENCE REVISION</scope>
    <source>
        <strain>ATCC 25618 / H37Rv</strain>
    </source>
</reference>
<reference key="3">
    <citation type="journal article" date="2002" name="Mol. Microbiol.">
        <title>Evaluation of a nutrient starvation model of Mycobacterium tuberculosis persistence by gene and protein expression profiling.</title>
        <authorList>
            <person name="Betts J.C."/>
            <person name="Lukey P.T."/>
            <person name="Robb L.C."/>
            <person name="McAdam R.A."/>
            <person name="Duncan K."/>
        </authorList>
    </citation>
    <scope>INDUCTION FOLLOWING STARVATION</scope>
    <source>
        <strain>ATCC 25618 / H37Rv / NCTC 7416</strain>
    </source>
</reference>
<reference key="4">
    <citation type="journal article" date="2002" name="Mol. Microbiol.">
        <title>Novel Mycobacterium tuberculosis anti-sigma factor antagonists control sigmaF activity by distinct mechanisms.</title>
        <authorList>
            <person name="Beaucher J."/>
            <person name="Rodrigue S."/>
            <person name="Jacques P.E."/>
            <person name="Smith I."/>
            <person name="Brzezinski R."/>
            <person name="Gaudreau L."/>
        </authorList>
    </citation>
    <scope>FUNCTION AS AN ANTI-SIGMA FACTOR</scope>
    <scope>INTERACTION WITH SIGF; RSFA AND RSFB</scope>
</reference>
<reference key="5">
    <citation type="journal article" date="2008" name="Biochem. Biophys. Res. Commun.">
        <title>Mycobacterium tuberculosis UsfX (Rv3287c) exhibits novel nucleotide binding and hydrolysis properties.</title>
        <authorList>
            <person name="Malik S.S."/>
            <person name="Luthra A."/>
            <person name="Srivastava S.K."/>
            <person name="Ramachandran R."/>
        </authorList>
    </citation>
    <scope>POSSIBLE NUCLEOTIDE HYDROLYSIS</scope>
    <scope>SUBUNIT</scope>
    <scope>NUCLEOTIDE-BINDING</scope>
</reference>
<reference key="6">
    <citation type="journal article" date="2009" name="Biochim. Biophys. Acta">
        <title>Interactions of the M. tuberculosis UsfX with the cognate sigma factor SigF and the anti-anti sigma factor RsfA.</title>
        <authorList>
            <person name="Malik S.S."/>
            <person name="Luthra A."/>
            <person name="Ramachandran R."/>
        </authorList>
    </citation>
    <scope>SUBUNIT</scope>
    <scope>INTERACTION WITH SIGF AND RSFA</scope>
</reference>
<reference key="7">
    <citation type="journal article" date="2010" name="J. Bacteriol.">
        <title>Sigma factor F does not prevent rifampin inhibition of RNA polymerase or cause rifampin tolerance in Mycobacterium tuberculosis.</title>
        <authorList>
            <person name="Hartkoorn R.C."/>
            <person name="Sala C."/>
            <person name="Magnet S.J."/>
            <person name="Chen J.M."/>
            <person name="Pojer F."/>
            <person name="Cole S.T."/>
        </authorList>
    </citation>
    <scope>DISRUPTION PHENOTYPE</scope>
    <source>
        <strain>ATCC 25618 / H37Rv</strain>
    </source>
</reference>
<reference key="8">
    <citation type="journal article" date="2010" name="Protein Expr. Purif.">
        <title>Over-expression and purification strategies for recombinant multi-protein oligomers: a case study of Mycobacterium tuberculosis sigma/anti-sigma factor protein complexes.</title>
        <authorList>
            <person name="Thakur K.G."/>
            <person name="Jaiswal R.K."/>
            <person name="Shukla J.K."/>
            <person name="Praveena T."/>
            <person name="Gopal B."/>
        </authorList>
    </citation>
    <scope>INTERACTION WITH SIGF</scope>
</reference>
<reference key="9">
    <citation type="journal article" date="2011" name="BMC Microbiol.">
        <title>Biochemical and physiological characterization of the GTP-binding protein Obg of Mycobacterium tuberculosis.</title>
        <authorList>
            <person name="Sasindran S.J."/>
            <person name="Saikolappan S."/>
            <person name="Scofield V.L."/>
            <person name="Dhandayuthapani S."/>
        </authorList>
    </citation>
    <scope>INTERACTION WITH OBG</scope>
    <source>
        <strain>H37Rv</strain>
    </source>
</reference>
<reference key="10">
    <citation type="journal article" date="2011" name="Mol. Cell. Proteomics">
        <title>Proteogenomic analysis of Mycobacterium tuberculosis by high resolution mass spectrometry.</title>
        <authorList>
            <person name="Kelkar D.S."/>
            <person name="Kumar D."/>
            <person name="Kumar P."/>
            <person name="Balakrishnan L."/>
            <person name="Muthusamy B."/>
            <person name="Yadav A.K."/>
            <person name="Shrivastava P."/>
            <person name="Marimuthu A."/>
            <person name="Anand S."/>
            <person name="Sundaram H."/>
            <person name="Kingsbury R."/>
            <person name="Harsha H.C."/>
            <person name="Nair B."/>
            <person name="Prasad T.S."/>
            <person name="Chauhan D.S."/>
            <person name="Katoch K."/>
            <person name="Katoch V.M."/>
            <person name="Kumar P."/>
            <person name="Chaerkady R."/>
            <person name="Ramachandran S."/>
            <person name="Dash D."/>
            <person name="Pandey A."/>
        </authorList>
    </citation>
    <scope>IDENTIFICATION BY MASS SPECTROMETRY [LARGE SCALE ANALYSIS]</scope>
    <source>
        <strain>ATCC 25618 / H37Rv</strain>
    </source>
</reference>
<name>RSBW_MYCTU</name>
<accession>P9WGX7</accession>
<accession>Q798J8</accession>
<accession>Q7D5S1</accession>
<sequence length="168" mass="17928">MTDQLEDQTQGGSTVDRSLPGGCMADSDLPTKGRQRGVRAVELNVAARLENLALLRTLVGAIGTFEDLDFDAVADLRLAVDEVCTRLIRSALPDATLRLVVDPRKDEVVVEASAACDTHDVVAPGSFSWHVLTALADDVQTFHDGRQPDVAGSVFGITLTARRAASSR</sequence>
<protein>
    <recommendedName>
        <fullName>Anti-sigma-F factor RsbW</fullName>
    </recommendedName>
    <alternativeName>
        <fullName>Anti-sigma-F factor UsfX</fullName>
    </alternativeName>
    <alternativeName>
        <fullName>Regulator of SigF</fullName>
    </alternativeName>
    <alternativeName>
        <fullName>Sigma-F anti-sigma factor RsbW</fullName>
    </alternativeName>
</protein>
<feature type="chain" id="PRO_0000422955" description="Anti-sigma-F factor RsbW">
    <location>
        <begin position="1"/>
        <end position="168"/>
    </location>
</feature>
<feature type="region of interest" description="Disordered" evidence="2">
    <location>
        <begin position="1"/>
        <end position="31"/>
    </location>
</feature>
<feature type="compositionally biased region" description="Polar residues" evidence="2">
    <location>
        <begin position="7"/>
        <end position="16"/>
    </location>
</feature>
<feature type="binding site" evidence="1">
    <location>
        <begin position="124"/>
        <end position="128"/>
    </location>
    <ligand>
        <name>ATP</name>
        <dbReference type="ChEBI" id="CHEBI:30616"/>
    </ligand>
</feature>
<keyword id="KW-0002">3D-structure</keyword>
<keyword id="KW-0067">ATP-binding</keyword>
<keyword id="KW-0378">Hydrolase</keyword>
<keyword id="KW-0547">Nucleotide-binding</keyword>
<keyword id="KW-1185">Reference proteome</keyword>
<keyword id="KW-0804">Transcription</keyword>
<keyword id="KW-0805">Transcription regulation</keyword>